<proteinExistence type="evidence at protein level"/>
<dbReference type="EC" id="3.1.1.-" evidence="5"/>
<dbReference type="EMBL" id="HG970332">
    <property type="protein sequence ID" value="CEF73335.1"/>
    <property type="molecule type" value="Genomic_DNA"/>
</dbReference>
<dbReference type="RefSeq" id="XP_011317015.1">
    <property type="nucleotide sequence ID" value="XM_011318713.1"/>
</dbReference>
<dbReference type="SMR" id="I1RCD3"/>
<dbReference type="FunCoup" id="I1RCD3">
    <property type="interactions" value="9"/>
</dbReference>
<dbReference type="KEGG" id="fgr:FGSG_01240"/>
<dbReference type="VEuPathDB" id="FungiDB:FGRAMPH1_01G03067"/>
<dbReference type="eggNOG" id="KOG4569">
    <property type="taxonomic scope" value="Eukaryota"/>
</dbReference>
<dbReference type="HOGENOM" id="CLU_032957_3_1_1"/>
<dbReference type="InParanoid" id="I1RCD3"/>
<dbReference type="OrthoDB" id="100480at110618"/>
<dbReference type="Proteomes" id="UP000070720">
    <property type="component" value="Chromosome 1"/>
</dbReference>
<dbReference type="GO" id="GO:0005576">
    <property type="term" value="C:extracellular region"/>
    <property type="evidence" value="ECO:0007669"/>
    <property type="project" value="UniProtKB-SubCell"/>
</dbReference>
<dbReference type="GO" id="GO:0016787">
    <property type="term" value="F:hydrolase activity"/>
    <property type="evidence" value="ECO:0007669"/>
    <property type="project" value="UniProtKB-KW"/>
</dbReference>
<dbReference type="GO" id="GO:0046872">
    <property type="term" value="F:metal ion binding"/>
    <property type="evidence" value="ECO:0007669"/>
    <property type="project" value="UniProtKB-KW"/>
</dbReference>
<dbReference type="GO" id="GO:0016042">
    <property type="term" value="P:lipid catabolic process"/>
    <property type="evidence" value="ECO:0007669"/>
    <property type="project" value="UniProtKB-KW"/>
</dbReference>
<dbReference type="CDD" id="cd00519">
    <property type="entry name" value="Lipase_3"/>
    <property type="match status" value="1"/>
</dbReference>
<dbReference type="Gene3D" id="3.40.50.1820">
    <property type="entry name" value="alpha/beta hydrolase"/>
    <property type="match status" value="1"/>
</dbReference>
<dbReference type="InterPro" id="IPR029058">
    <property type="entry name" value="AB_hydrolase_fold"/>
</dbReference>
<dbReference type="InterPro" id="IPR051299">
    <property type="entry name" value="AB_hydrolase_lip/est"/>
</dbReference>
<dbReference type="InterPro" id="IPR002921">
    <property type="entry name" value="Fungal_lipase-type"/>
</dbReference>
<dbReference type="PANTHER" id="PTHR46640:SF1">
    <property type="entry name" value="FUNGAL LIPASE-LIKE DOMAIN-CONTAINING PROTEIN-RELATED"/>
    <property type="match status" value="1"/>
</dbReference>
<dbReference type="PANTHER" id="PTHR46640">
    <property type="entry name" value="TRIACYLGLYCEROL LIPASE, PUTATIVE (AFU_ORTHOLOGUE AFUA_6G06510)-RELATED"/>
    <property type="match status" value="1"/>
</dbReference>
<dbReference type="Pfam" id="PF01764">
    <property type="entry name" value="Lipase_3"/>
    <property type="match status" value="1"/>
</dbReference>
<dbReference type="SUPFAM" id="SSF53474">
    <property type="entry name" value="alpha/beta-Hydrolases"/>
    <property type="match status" value="1"/>
</dbReference>
<dbReference type="PROSITE" id="PS00120">
    <property type="entry name" value="LIPASE_SER"/>
    <property type="match status" value="1"/>
</dbReference>
<accession>I1RCD3</accession>
<feature type="signal peptide" evidence="2">
    <location>
        <begin position="1"/>
        <end position="24"/>
    </location>
</feature>
<feature type="chain" id="PRO_5010124071" description="Secreted mono- and diacylglycerol lipase 2">
    <location>
        <begin position="25"/>
        <end position="408"/>
    </location>
</feature>
<feature type="active site" description="Nucleophile" evidence="4">
    <location>
        <position position="217"/>
    </location>
</feature>
<feature type="active site" evidence="1">
    <location>
        <position position="283"/>
    </location>
</feature>
<feature type="active site" evidence="1">
    <location>
        <position position="374"/>
    </location>
</feature>
<feature type="glycosylation site" description="N-linked (GlcNAc...) asparagine" evidence="3">
    <location>
        <position position="177"/>
    </location>
</feature>
<evidence type="ECO:0000250" key="1">
    <source>
        <dbReference type="UniProtKB" id="A8PUY1"/>
    </source>
</evidence>
<evidence type="ECO:0000255" key="2"/>
<evidence type="ECO:0000255" key="3">
    <source>
        <dbReference type="PROSITE-ProRule" id="PRU00498"/>
    </source>
</evidence>
<evidence type="ECO:0000255" key="4">
    <source>
        <dbReference type="PROSITE-ProRule" id="PRU10037"/>
    </source>
</evidence>
<evidence type="ECO:0000269" key="5">
    <source>
    </source>
</evidence>
<evidence type="ECO:0000303" key="6">
    <source>
    </source>
</evidence>
<evidence type="ECO:0000305" key="7"/>
<evidence type="ECO:0000305" key="8">
    <source>
    </source>
</evidence>
<comment type="function">
    <text evidence="5">Secreted mono- and diacylglycerol lipase involved in plant virulence (PubMed:25919623). Has a substrate preference for p-nitrophenyl esters with a carbon chain length of C10 (p-nitrophenyl caprate) (PubMed:25919623).</text>
</comment>
<comment type="catalytic activity">
    <reaction evidence="8">
        <text>a monoacylglycerol + H2O = glycerol + a fatty acid + H(+)</text>
        <dbReference type="Rhea" id="RHEA:15245"/>
        <dbReference type="ChEBI" id="CHEBI:15377"/>
        <dbReference type="ChEBI" id="CHEBI:15378"/>
        <dbReference type="ChEBI" id="CHEBI:17408"/>
        <dbReference type="ChEBI" id="CHEBI:17754"/>
        <dbReference type="ChEBI" id="CHEBI:28868"/>
    </reaction>
</comment>
<comment type="catalytic activity">
    <reaction evidence="5">
        <text>a diacylglycerol + H2O = a monoacylglycerol + a fatty acid + H(+)</text>
        <dbReference type="Rhea" id="RHEA:32731"/>
        <dbReference type="ChEBI" id="CHEBI:15377"/>
        <dbReference type="ChEBI" id="CHEBI:15378"/>
        <dbReference type="ChEBI" id="CHEBI:17408"/>
        <dbReference type="ChEBI" id="CHEBI:18035"/>
        <dbReference type="ChEBI" id="CHEBI:28868"/>
    </reaction>
</comment>
<comment type="biophysicochemical properties">
    <phDependence>
        <text evidence="5">Optimum pH is 7.0.</text>
    </phDependence>
    <temperatureDependence>
        <text evidence="5">Optimum temperature is 35 to 38 degrees Celsius.</text>
    </temperatureDependence>
</comment>
<comment type="subcellular location">
    <subcellularLocation>
        <location evidence="5">Secreted</location>
    </subcellularLocation>
</comment>
<comment type="induction">
    <text evidence="5">Transcript accumulation reached its highest level in 6 hour old cultures.</text>
</comment>
<comment type="similarity">
    <text evidence="7">Belongs to the AB hydrolase superfamily. Lipase family. Class 3 subfamily.</text>
</comment>
<protein>
    <recommendedName>
        <fullName evidence="6">Secreted mono- and diacylglycerol lipase 2</fullName>
        <ecNumber evidence="5">3.1.1.-</ecNumber>
    </recommendedName>
</protein>
<name>FGL2_GIBZE</name>
<gene>
    <name evidence="6" type="primary">FGL2</name>
    <name type="ORF">FG01240</name>
    <name type="ORF">FGRAMPH1_01T03067</name>
</gene>
<reference key="1">
    <citation type="journal article" date="2007" name="Science">
        <title>The Fusarium graminearum genome reveals a link between localized polymorphism and pathogen specialization.</title>
        <authorList>
            <person name="Cuomo C.A."/>
            <person name="Gueldener U."/>
            <person name="Xu J.-R."/>
            <person name="Trail F."/>
            <person name="Turgeon B.G."/>
            <person name="Di Pietro A."/>
            <person name="Walton J.D."/>
            <person name="Ma L.-J."/>
            <person name="Baker S.E."/>
            <person name="Rep M."/>
            <person name="Adam G."/>
            <person name="Antoniw J."/>
            <person name="Baldwin T."/>
            <person name="Calvo S.E."/>
            <person name="Chang Y.-L."/>
            <person name="DeCaprio D."/>
            <person name="Gale L.R."/>
            <person name="Gnerre S."/>
            <person name="Goswami R.S."/>
            <person name="Hammond-Kosack K."/>
            <person name="Harris L.J."/>
            <person name="Hilburn K."/>
            <person name="Kennell J.C."/>
            <person name="Kroken S."/>
            <person name="Magnuson J.K."/>
            <person name="Mannhaupt G."/>
            <person name="Mauceli E.W."/>
            <person name="Mewes H.-W."/>
            <person name="Mitterbauer R."/>
            <person name="Muehlbauer G."/>
            <person name="Muensterkoetter M."/>
            <person name="Nelson D."/>
            <person name="O'Donnell K."/>
            <person name="Ouellet T."/>
            <person name="Qi W."/>
            <person name="Quesneville H."/>
            <person name="Roncero M.I.G."/>
            <person name="Seong K.-Y."/>
            <person name="Tetko I.V."/>
            <person name="Urban M."/>
            <person name="Waalwijk C."/>
            <person name="Ward T.J."/>
            <person name="Yao J."/>
            <person name="Birren B.W."/>
            <person name="Kistler H.C."/>
        </authorList>
    </citation>
    <scope>NUCLEOTIDE SEQUENCE [LARGE SCALE GENOMIC DNA]</scope>
    <source>
        <strain>ATCC MYA-4620 / CBS 123657 / FGSC 9075 / NRRL 31084 / PH-1</strain>
    </source>
</reference>
<reference key="2">
    <citation type="journal article" date="2010" name="Nature">
        <title>Comparative genomics reveals mobile pathogenicity chromosomes in Fusarium.</title>
        <authorList>
            <person name="Ma L.-J."/>
            <person name="van der Does H.C."/>
            <person name="Borkovich K.A."/>
            <person name="Coleman J.J."/>
            <person name="Daboussi M.-J."/>
            <person name="Di Pietro A."/>
            <person name="Dufresne M."/>
            <person name="Freitag M."/>
            <person name="Grabherr M."/>
            <person name="Henrissat B."/>
            <person name="Houterman P.M."/>
            <person name="Kang S."/>
            <person name="Shim W.-B."/>
            <person name="Woloshuk C."/>
            <person name="Xie X."/>
            <person name="Xu J.-R."/>
            <person name="Antoniw J."/>
            <person name="Baker S.E."/>
            <person name="Bluhm B.H."/>
            <person name="Breakspear A."/>
            <person name="Brown D.W."/>
            <person name="Butchko R.A.E."/>
            <person name="Chapman S."/>
            <person name="Coulson R."/>
            <person name="Coutinho P.M."/>
            <person name="Danchin E.G.J."/>
            <person name="Diener A."/>
            <person name="Gale L.R."/>
            <person name="Gardiner D.M."/>
            <person name="Goff S."/>
            <person name="Hammond-Kosack K.E."/>
            <person name="Hilburn K."/>
            <person name="Hua-Van A."/>
            <person name="Jonkers W."/>
            <person name="Kazan K."/>
            <person name="Kodira C.D."/>
            <person name="Koehrsen M."/>
            <person name="Kumar L."/>
            <person name="Lee Y.-H."/>
            <person name="Li L."/>
            <person name="Manners J.M."/>
            <person name="Miranda-Saavedra D."/>
            <person name="Mukherjee M."/>
            <person name="Park G."/>
            <person name="Park J."/>
            <person name="Park S.-Y."/>
            <person name="Proctor R.H."/>
            <person name="Regev A."/>
            <person name="Ruiz-Roldan M.C."/>
            <person name="Sain D."/>
            <person name="Sakthikumar S."/>
            <person name="Sykes S."/>
            <person name="Schwartz D.C."/>
            <person name="Turgeon B.G."/>
            <person name="Wapinski I."/>
            <person name="Yoder O."/>
            <person name="Young S."/>
            <person name="Zeng Q."/>
            <person name="Zhou S."/>
            <person name="Galagan J."/>
            <person name="Cuomo C.A."/>
            <person name="Kistler H.C."/>
            <person name="Rep M."/>
        </authorList>
    </citation>
    <scope>GENOME REANNOTATION</scope>
    <source>
        <strain>ATCC MYA-4620 / CBS 123657 / FGSC 9075 / NRRL 31084 / PH-1</strain>
    </source>
</reference>
<reference key="3">
    <citation type="journal article" date="2015" name="BMC Genomics">
        <title>The completed genome sequence of the pathogenic ascomycete fungus Fusarium graminearum.</title>
        <authorList>
            <person name="King R."/>
            <person name="Urban M."/>
            <person name="Hammond-Kosack M.C.U."/>
            <person name="Hassani-Pak K."/>
            <person name="Hammond-Kosack K.E."/>
        </authorList>
    </citation>
    <scope>NUCLEOTIDE SEQUENCE [LARGE SCALE GENOMIC DNA]</scope>
    <source>
        <strain>ATCC MYA-4620 / CBS 123657 / FGSC 9075 / NRRL 31084 / PH-1</strain>
    </source>
</reference>
<reference key="4">
    <citation type="journal article" date="2010" name="Enzyme Microb. Technol.">
        <title>Enzymatic properties and expression patterns of five extracellular lipases of Fusarium graminearum in vitro.</title>
        <authorList>
            <person name="Nguyen L.N."/>
            <person name="Dao T.T."/>
            <person name="Zivkovic T."/>
            <person name="Fehrholz M."/>
            <person name="Schaefer W."/>
            <person name="Salomon S."/>
        </authorList>
    </citation>
    <scope>FUNCTION</scope>
    <scope>CATALYTIC ACTIVITY</scope>
    <scope>BIOPHYSICOCHEMICAL PROPERTIES</scope>
    <scope>SUBCELLULAR LOCATION</scope>
    <scope>INDUCTION</scope>
</reference>
<keyword id="KW-0325">Glycoprotein</keyword>
<keyword id="KW-0378">Hydrolase</keyword>
<keyword id="KW-0442">Lipid degradation</keyword>
<keyword id="KW-0443">Lipid metabolism</keyword>
<keyword id="KW-0479">Metal-binding</keyword>
<keyword id="KW-1185">Reference proteome</keyword>
<keyword id="KW-0964">Secreted</keyword>
<keyword id="KW-0732">Signal</keyword>
<organism>
    <name type="scientific">Gibberella zeae (strain ATCC MYA-4620 / CBS 123657 / FGSC 9075 / NRRL 31084 / PH-1)</name>
    <name type="common">Wheat head blight fungus</name>
    <name type="synonym">Fusarium graminearum</name>
    <dbReference type="NCBI Taxonomy" id="229533"/>
    <lineage>
        <taxon>Eukaryota</taxon>
        <taxon>Fungi</taxon>
        <taxon>Dikarya</taxon>
        <taxon>Ascomycota</taxon>
        <taxon>Pezizomycotina</taxon>
        <taxon>Sordariomycetes</taxon>
        <taxon>Hypocreomycetidae</taxon>
        <taxon>Hypocreales</taxon>
        <taxon>Nectriaceae</taxon>
        <taxon>Fusarium</taxon>
    </lineage>
</organism>
<sequence>MRFKLADSLSLITVQLILATSTLALSNPGSSSQKHSPNPSAPSPKGISVPFFATLERLSRLVDIAYCIGTTGVRKPFNCVSRCNDFPSLSLINAWNTGPLLSDSCGYIAVDHGVAQHGDSGDLTAGEPAIVVAFRGTYSIANTIVDLSTVPQEYVPYPSPDHGGSEPPNEPEHTCTNCTVHMGFLQSWKNTRQFVLPQLRQLRLQYPSYPIQLVGHSLGGSVACLAALELKVSLGWENVIVTTFGEPRVGNEGLARFVDEVFYLNDDNNPEGREFRRVTHKEDPVPLLPLSEWGYKSHAGEVYITKQELTPSESDIYMCIGDNDPKCIAGADDSLWMTTRRLFHARNLWTASDKLAEPNGFPSRFKLWQLLFAHRDYFWRLGLCVPGGDPADWGRGRYQGLGPDTEEL</sequence>